<dbReference type="EC" id="2.3.1.286" evidence="1 2"/>
<dbReference type="EMBL" id="CP001463">
    <property type="protein sequence ID" value="ACS89688.1"/>
    <property type="molecule type" value="Genomic_DNA"/>
</dbReference>
<dbReference type="RefSeq" id="WP_015848908.1">
    <property type="nucleotide sequence ID" value="NC_012883.1"/>
</dbReference>
<dbReference type="SMR" id="C6A243"/>
<dbReference type="STRING" id="604354.TSIB_0623"/>
<dbReference type="GeneID" id="8095611"/>
<dbReference type="KEGG" id="tsi:TSIB_0623"/>
<dbReference type="eggNOG" id="arCOG04248">
    <property type="taxonomic scope" value="Archaea"/>
</dbReference>
<dbReference type="HOGENOM" id="CLU_023643_3_1_2"/>
<dbReference type="OrthoDB" id="728at2157"/>
<dbReference type="Proteomes" id="UP000009079">
    <property type="component" value="Chromosome"/>
</dbReference>
<dbReference type="GO" id="GO:0005737">
    <property type="term" value="C:cytoplasm"/>
    <property type="evidence" value="ECO:0007669"/>
    <property type="project" value="UniProtKB-SubCell"/>
</dbReference>
<dbReference type="GO" id="GO:0017136">
    <property type="term" value="F:histone deacetylase activity, NAD-dependent"/>
    <property type="evidence" value="ECO:0007669"/>
    <property type="project" value="TreeGrafter"/>
</dbReference>
<dbReference type="GO" id="GO:0070403">
    <property type="term" value="F:NAD+ binding"/>
    <property type="evidence" value="ECO:0007669"/>
    <property type="project" value="UniProtKB-UniRule"/>
</dbReference>
<dbReference type="GO" id="GO:0036054">
    <property type="term" value="F:protein-malonyllysine demalonylase activity"/>
    <property type="evidence" value="ECO:0007669"/>
    <property type="project" value="InterPro"/>
</dbReference>
<dbReference type="GO" id="GO:0036055">
    <property type="term" value="F:protein-succinyllysine desuccinylase activity"/>
    <property type="evidence" value="ECO:0007669"/>
    <property type="project" value="UniProtKB-UniRule"/>
</dbReference>
<dbReference type="GO" id="GO:0008270">
    <property type="term" value="F:zinc ion binding"/>
    <property type="evidence" value="ECO:0007669"/>
    <property type="project" value="UniProtKB-UniRule"/>
</dbReference>
<dbReference type="CDD" id="cd01412">
    <property type="entry name" value="SIRT5_Af1_CobB"/>
    <property type="match status" value="1"/>
</dbReference>
<dbReference type="Gene3D" id="3.30.1600.10">
    <property type="entry name" value="SIR2/SIRT2 'Small Domain"/>
    <property type="match status" value="1"/>
</dbReference>
<dbReference type="Gene3D" id="3.40.50.1220">
    <property type="entry name" value="TPP-binding domain"/>
    <property type="match status" value="1"/>
</dbReference>
<dbReference type="HAMAP" id="MF_01121">
    <property type="entry name" value="Sirtuin_ClassIII"/>
    <property type="match status" value="1"/>
</dbReference>
<dbReference type="InterPro" id="IPR029035">
    <property type="entry name" value="DHS-like_NAD/FAD-binding_dom"/>
</dbReference>
<dbReference type="InterPro" id="IPR050134">
    <property type="entry name" value="NAD-dep_sirtuin_deacylases"/>
</dbReference>
<dbReference type="InterPro" id="IPR003000">
    <property type="entry name" value="Sirtuin"/>
</dbReference>
<dbReference type="InterPro" id="IPR026591">
    <property type="entry name" value="Sirtuin_cat_small_dom_sf"/>
</dbReference>
<dbReference type="InterPro" id="IPR027546">
    <property type="entry name" value="Sirtuin_class_III"/>
</dbReference>
<dbReference type="InterPro" id="IPR026590">
    <property type="entry name" value="Ssirtuin_cat_dom"/>
</dbReference>
<dbReference type="NCBIfam" id="NF001753">
    <property type="entry name" value="PRK00481.1-3"/>
    <property type="match status" value="1"/>
</dbReference>
<dbReference type="NCBIfam" id="NF040867">
    <property type="entry name" value="prot_deacyl_CobB"/>
    <property type="match status" value="1"/>
</dbReference>
<dbReference type="PANTHER" id="PTHR11085">
    <property type="entry name" value="NAD-DEPENDENT PROTEIN DEACYLASE SIRTUIN-5, MITOCHONDRIAL-RELATED"/>
    <property type="match status" value="1"/>
</dbReference>
<dbReference type="PANTHER" id="PTHR11085:SF10">
    <property type="entry name" value="NAD-DEPENDENT PROTEIN DEACYLASE SIRTUIN-5, MITOCHONDRIAL-RELATED"/>
    <property type="match status" value="1"/>
</dbReference>
<dbReference type="Pfam" id="PF02146">
    <property type="entry name" value="SIR2"/>
    <property type="match status" value="1"/>
</dbReference>
<dbReference type="SUPFAM" id="SSF52467">
    <property type="entry name" value="DHS-like NAD/FAD-binding domain"/>
    <property type="match status" value="1"/>
</dbReference>
<dbReference type="PROSITE" id="PS50305">
    <property type="entry name" value="SIRTUIN"/>
    <property type="match status" value="1"/>
</dbReference>
<reference key="1">
    <citation type="journal article" date="2009" name="Appl. Environ. Microbiol.">
        <title>Metabolic versatility and indigenous origin of the archaeon Thermococcus sibiricus, isolated from a siberian oil reservoir, as revealed by genome analysis.</title>
        <authorList>
            <person name="Mardanov A.V."/>
            <person name="Ravin N.V."/>
            <person name="Svetlitchnyi V.A."/>
            <person name="Beletsky A.V."/>
            <person name="Miroshnichenko M.L."/>
            <person name="Bonch-Osmolovskaya E.A."/>
            <person name="Skryabin K.G."/>
        </authorList>
    </citation>
    <scope>NUCLEOTIDE SEQUENCE [LARGE SCALE GENOMIC DNA]</scope>
    <source>
        <strain>DSM 12597 / MM 739</strain>
    </source>
</reference>
<name>NPD_THESM</name>
<organism>
    <name type="scientific">Thermococcus sibiricus (strain DSM 12597 / MM 739)</name>
    <dbReference type="NCBI Taxonomy" id="604354"/>
    <lineage>
        <taxon>Archaea</taxon>
        <taxon>Methanobacteriati</taxon>
        <taxon>Methanobacteriota</taxon>
        <taxon>Thermococci</taxon>
        <taxon>Thermococcales</taxon>
        <taxon>Thermococcaceae</taxon>
        <taxon>Thermococcus</taxon>
    </lineage>
</organism>
<gene>
    <name evidence="1" type="primary">cobB</name>
    <name type="ordered locus">TSIB_0623</name>
</gene>
<evidence type="ECO:0000255" key="1">
    <source>
        <dbReference type="HAMAP-Rule" id="MF_01121"/>
    </source>
</evidence>
<evidence type="ECO:0000255" key="2">
    <source>
        <dbReference type="PROSITE-ProRule" id="PRU00236"/>
    </source>
</evidence>
<protein>
    <recommendedName>
        <fullName evidence="1">NAD-dependent protein deacylase</fullName>
        <ecNumber evidence="1 2">2.3.1.286</ecNumber>
    </recommendedName>
    <alternativeName>
        <fullName evidence="1">Regulatory protein SIR2 homolog</fullName>
    </alternativeName>
</protein>
<keyword id="KW-0963">Cytoplasm</keyword>
<keyword id="KW-0479">Metal-binding</keyword>
<keyword id="KW-0520">NAD</keyword>
<keyword id="KW-1185">Reference proteome</keyword>
<keyword id="KW-0804">Transcription</keyword>
<keyword id="KW-0805">Transcription regulation</keyword>
<keyword id="KW-0808">Transferase</keyword>
<keyword id="KW-0862">Zinc</keyword>
<comment type="function">
    <text evidence="1">NAD-dependent lysine deacetylase and desuccinylase that specifically removes acetyl and succinyl groups on target proteins. Modulates the activities of several proteins which are inactive in their acylated form. Deacetylates the N-terminal lysine residue of Alba, the major archaeal chromatin protein and that, in turn, increases Alba's DNA binding affinity, thereby repressing transcription.</text>
</comment>
<comment type="catalytic activity">
    <reaction evidence="1">
        <text>N(6)-acetyl-L-lysyl-[protein] + NAD(+) + H2O = 2''-O-acetyl-ADP-D-ribose + nicotinamide + L-lysyl-[protein]</text>
        <dbReference type="Rhea" id="RHEA:43636"/>
        <dbReference type="Rhea" id="RHEA-COMP:9752"/>
        <dbReference type="Rhea" id="RHEA-COMP:10731"/>
        <dbReference type="ChEBI" id="CHEBI:15377"/>
        <dbReference type="ChEBI" id="CHEBI:17154"/>
        <dbReference type="ChEBI" id="CHEBI:29969"/>
        <dbReference type="ChEBI" id="CHEBI:57540"/>
        <dbReference type="ChEBI" id="CHEBI:61930"/>
        <dbReference type="ChEBI" id="CHEBI:83767"/>
        <dbReference type="EC" id="2.3.1.286"/>
    </reaction>
</comment>
<comment type="catalytic activity">
    <reaction evidence="1">
        <text>N(6)-succinyl-L-lysyl-[protein] + NAD(+) + H2O = 2''-O-succinyl-ADP-D-ribose + nicotinamide + L-lysyl-[protein]</text>
        <dbReference type="Rhea" id="RHEA:47668"/>
        <dbReference type="Rhea" id="RHEA-COMP:9752"/>
        <dbReference type="Rhea" id="RHEA-COMP:11877"/>
        <dbReference type="ChEBI" id="CHEBI:15377"/>
        <dbReference type="ChEBI" id="CHEBI:17154"/>
        <dbReference type="ChEBI" id="CHEBI:29969"/>
        <dbReference type="ChEBI" id="CHEBI:57540"/>
        <dbReference type="ChEBI" id="CHEBI:87830"/>
        <dbReference type="ChEBI" id="CHEBI:87832"/>
    </reaction>
</comment>
<comment type="cofactor">
    <cofactor evidence="1">
        <name>Zn(2+)</name>
        <dbReference type="ChEBI" id="CHEBI:29105"/>
    </cofactor>
    <text evidence="1">Binds 1 zinc ion per subunit.</text>
</comment>
<comment type="subcellular location">
    <subcellularLocation>
        <location evidence="1">Cytoplasm</location>
    </subcellularLocation>
</comment>
<comment type="domain">
    <text evidence="1">2 residues (Tyr-64 and Arg-67) present in a large hydrophobic pocket are probably involved in substrate specificity. They are important for desuccinylation activity, but dispensable for deacetylation activity.</text>
</comment>
<comment type="similarity">
    <text evidence="1">Belongs to the sirtuin family. Class III subfamily.</text>
</comment>
<proteinExistence type="inferred from homology"/>
<sequence length="255" mass="28559">MIEEAPRIIAHSRFLIAFTGAGVSAESGIPTFRDRGGLWENYRIEEVATPEAFRKDPNLVWSFYKMRMKIMKGAKPNNAHLALAELEKMGILKAVITQNIDNLHREAGNQHIVELHGNIYRVKCTRCDYMENLLESGKLEDFLKEKNLPKCPECASLLRPDVVWFGEPLPQEALQKAFKLAERADVCLVVGTSAQVFPAAYVPYIVKDNGGSVIEINTKESGITPIADVFIRGKAGEVMQSLLVKVKRCLENKKC</sequence>
<feature type="chain" id="PRO_1000213620" description="NAD-dependent protein deacylase">
    <location>
        <begin position="1"/>
        <end position="255"/>
    </location>
</feature>
<feature type="domain" description="Deacetylase sirtuin-type" evidence="2">
    <location>
        <begin position="1"/>
        <end position="253"/>
    </location>
</feature>
<feature type="active site" description="Proton acceptor" evidence="2">
    <location>
        <position position="116"/>
    </location>
</feature>
<feature type="binding site" evidence="1">
    <location>
        <begin position="20"/>
        <end position="39"/>
    </location>
    <ligand>
        <name>NAD(+)</name>
        <dbReference type="ChEBI" id="CHEBI:57540"/>
    </ligand>
</feature>
<feature type="binding site" evidence="1">
    <location>
        <position position="64"/>
    </location>
    <ligand>
        <name>substrate</name>
    </ligand>
</feature>
<feature type="binding site" evidence="1">
    <location>
        <position position="67"/>
    </location>
    <ligand>
        <name>substrate</name>
    </ligand>
</feature>
<feature type="binding site" evidence="1">
    <location>
        <begin position="98"/>
        <end position="101"/>
    </location>
    <ligand>
        <name>NAD(+)</name>
        <dbReference type="ChEBI" id="CHEBI:57540"/>
    </ligand>
</feature>
<feature type="binding site" evidence="1">
    <location>
        <position position="124"/>
    </location>
    <ligand>
        <name>Zn(2+)</name>
        <dbReference type="ChEBI" id="CHEBI:29105"/>
    </ligand>
</feature>
<feature type="binding site" evidence="1">
    <location>
        <position position="127"/>
    </location>
    <ligand>
        <name>Zn(2+)</name>
        <dbReference type="ChEBI" id="CHEBI:29105"/>
    </ligand>
</feature>
<feature type="binding site" evidence="1">
    <location>
        <position position="151"/>
    </location>
    <ligand>
        <name>Zn(2+)</name>
        <dbReference type="ChEBI" id="CHEBI:29105"/>
    </ligand>
</feature>
<feature type="binding site" evidence="1">
    <location>
        <position position="154"/>
    </location>
    <ligand>
        <name>Zn(2+)</name>
        <dbReference type="ChEBI" id="CHEBI:29105"/>
    </ligand>
</feature>
<feature type="binding site" evidence="1">
    <location>
        <begin position="191"/>
        <end position="193"/>
    </location>
    <ligand>
        <name>NAD(+)</name>
        <dbReference type="ChEBI" id="CHEBI:57540"/>
    </ligand>
</feature>
<feature type="binding site" evidence="1">
    <location>
        <begin position="217"/>
        <end position="219"/>
    </location>
    <ligand>
        <name>NAD(+)</name>
        <dbReference type="ChEBI" id="CHEBI:57540"/>
    </ligand>
</feature>
<feature type="binding site" evidence="1">
    <location>
        <position position="235"/>
    </location>
    <ligand>
        <name>NAD(+)</name>
        <dbReference type="ChEBI" id="CHEBI:57540"/>
    </ligand>
</feature>
<accession>C6A243</accession>